<protein>
    <recommendedName>
        <fullName>NADH-ubiquinone oxidoreductase chain 3</fullName>
        <ecNumber>7.1.1.2</ecNumber>
    </recommendedName>
    <alternativeName>
        <fullName>NADH dehydrogenase subunit 3</fullName>
    </alternativeName>
</protein>
<evidence type="ECO:0000250" key="1"/>
<evidence type="ECO:0000255" key="2"/>
<evidence type="ECO:0000305" key="3"/>
<evidence type="ECO:0000312" key="4">
    <source>
        <dbReference type="Proteomes" id="UP000001554"/>
    </source>
</evidence>
<proteinExistence type="inferred from homology"/>
<comment type="function">
    <text evidence="1">Core subunit of the mitochondrial membrane respiratory chain NADH dehydrogenase (Complex I) that is believed to belong to the minimal assembly required for catalysis. Complex I functions in the transfer of electrons from NADH to the respiratory chain. The immediate electron acceptor for the enzyme is believed to be ubiquinone (By similarity).</text>
</comment>
<comment type="catalytic activity">
    <reaction>
        <text>a ubiquinone + NADH + 5 H(+)(in) = a ubiquinol + NAD(+) + 4 H(+)(out)</text>
        <dbReference type="Rhea" id="RHEA:29091"/>
        <dbReference type="Rhea" id="RHEA-COMP:9565"/>
        <dbReference type="Rhea" id="RHEA-COMP:9566"/>
        <dbReference type="ChEBI" id="CHEBI:15378"/>
        <dbReference type="ChEBI" id="CHEBI:16389"/>
        <dbReference type="ChEBI" id="CHEBI:17976"/>
        <dbReference type="ChEBI" id="CHEBI:57540"/>
        <dbReference type="ChEBI" id="CHEBI:57945"/>
        <dbReference type="EC" id="7.1.1.2"/>
    </reaction>
</comment>
<comment type="subcellular location">
    <subcellularLocation>
        <location evidence="1">Mitochondrion membrane</location>
        <topology evidence="1">Multi-pass membrane protein</topology>
    </subcellularLocation>
</comment>
<comment type="similarity">
    <text evidence="3">Belongs to the complex I subunit 3 family.</text>
</comment>
<reference key="1">
    <citation type="journal article" date="1999" name="Mol. Biol. Evol.">
        <title>Complete sequence, gene arrangement, and genetic code of mitochondrial DNA of the cephalochordate Branchiostoma floridae (Amphioxus).</title>
        <authorList>
            <person name="Boore J.L."/>
            <person name="Daehler L.L."/>
            <person name="Brown W.M."/>
        </authorList>
    </citation>
    <scope>NUCLEOTIDE SEQUENCE [LARGE SCALE GENOMIC DNA]</scope>
    <source>
        <strain evidence="4">S238N-H82</strain>
    </source>
</reference>
<gene>
    <name type="primary">ND3</name>
    <name type="synonym">NAD3</name>
    <name type="synonym">NADH3</name>
</gene>
<geneLocation type="mitochondrion"/>
<name>NU3M_BRAFL</name>
<accession>P69236</accession>
<accession>O47429</accession>
<dbReference type="EC" id="7.1.1.2"/>
<dbReference type="EMBL" id="AF098298">
    <property type="protein sequence ID" value="AAB87998.1"/>
    <property type="molecule type" value="Genomic_DNA"/>
</dbReference>
<dbReference type="RefSeq" id="NP_007762.1">
    <property type="nucleotide sequence ID" value="NC_000834.1"/>
</dbReference>
<dbReference type="SMR" id="P69236"/>
<dbReference type="FunCoup" id="P69236">
    <property type="interactions" value="11"/>
</dbReference>
<dbReference type="STRING" id="7739.P69236"/>
<dbReference type="GeneID" id="808731"/>
<dbReference type="KEGG" id="bfo:808731"/>
<dbReference type="CTD" id="4537"/>
<dbReference type="InParanoid" id="P69236"/>
<dbReference type="OMA" id="GPRRYNR"/>
<dbReference type="OrthoDB" id="154075at2759"/>
<dbReference type="Proteomes" id="UP000001554">
    <property type="component" value="Mitochondrion MT"/>
</dbReference>
<dbReference type="GO" id="GO:0031966">
    <property type="term" value="C:mitochondrial membrane"/>
    <property type="evidence" value="ECO:0007669"/>
    <property type="project" value="UniProtKB-SubCell"/>
</dbReference>
<dbReference type="GO" id="GO:0045271">
    <property type="term" value="C:respiratory chain complex I"/>
    <property type="evidence" value="ECO:0000318"/>
    <property type="project" value="GO_Central"/>
</dbReference>
<dbReference type="GO" id="GO:0008137">
    <property type="term" value="F:NADH dehydrogenase (ubiquinone) activity"/>
    <property type="evidence" value="ECO:0000318"/>
    <property type="project" value="GO_Central"/>
</dbReference>
<dbReference type="FunFam" id="1.20.58.1610:FF:000004">
    <property type="entry name" value="NADH-quinone oxidoreductase subunit A"/>
    <property type="match status" value="1"/>
</dbReference>
<dbReference type="Gene3D" id="1.20.58.1610">
    <property type="entry name" value="NADH:ubiquinone/plastoquinone oxidoreductase, chain 3"/>
    <property type="match status" value="1"/>
</dbReference>
<dbReference type="InterPro" id="IPR000440">
    <property type="entry name" value="NADH_UbQ/plastoQ_OxRdtase_su3"/>
</dbReference>
<dbReference type="InterPro" id="IPR038430">
    <property type="entry name" value="NDAH_ubi_oxred_su3_sf"/>
</dbReference>
<dbReference type="PANTHER" id="PTHR11058">
    <property type="entry name" value="NADH-UBIQUINONE OXIDOREDUCTASE CHAIN 3"/>
    <property type="match status" value="1"/>
</dbReference>
<dbReference type="PANTHER" id="PTHR11058:SF9">
    <property type="entry name" value="NADH-UBIQUINONE OXIDOREDUCTASE CHAIN 3"/>
    <property type="match status" value="1"/>
</dbReference>
<dbReference type="Pfam" id="PF00507">
    <property type="entry name" value="Oxidored_q4"/>
    <property type="match status" value="1"/>
</dbReference>
<organism>
    <name type="scientific">Branchiostoma floridae</name>
    <name type="common">Florida lancelet</name>
    <name type="synonym">Amphioxus</name>
    <dbReference type="NCBI Taxonomy" id="7739"/>
    <lineage>
        <taxon>Eukaryota</taxon>
        <taxon>Metazoa</taxon>
        <taxon>Chordata</taxon>
        <taxon>Cephalochordata</taxon>
        <taxon>Leptocardii</taxon>
        <taxon>Amphioxiformes</taxon>
        <taxon>Branchiostomatidae</taxon>
        <taxon>Branchiostoma</taxon>
    </lineage>
</organism>
<sequence length="117" mass="13268">MLSLTYIVGIASALVIILLLVGLHLPSVMPDNEKLSAYECGFDPMGNARLPFSLRFFLVAILFLLFDLEIALILPYPLGVVFSENTFYNYWLVMLLVVVLTFGLMYEWLKGGLEWTE</sequence>
<feature type="chain" id="PRO_0000117717" description="NADH-ubiquinone oxidoreductase chain 3">
    <location>
        <begin position="1"/>
        <end position="117"/>
    </location>
</feature>
<feature type="transmembrane region" description="Helical" evidence="2">
    <location>
        <begin position="1"/>
        <end position="21"/>
    </location>
</feature>
<feature type="transmembrane region" description="Helical" evidence="2">
    <location>
        <begin position="56"/>
        <end position="76"/>
    </location>
</feature>
<feature type="transmembrane region" description="Helical" evidence="2">
    <location>
        <begin position="86"/>
        <end position="106"/>
    </location>
</feature>
<keyword id="KW-0249">Electron transport</keyword>
<keyword id="KW-0472">Membrane</keyword>
<keyword id="KW-0496">Mitochondrion</keyword>
<keyword id="KW-0520">NAD</keyword>
<keyword id="KW-1185">Reference proteome</keyword>
<keyword id="KW-0679">Respiratory chain</keyword>
<keyword id="KW-1278">Translocase</keyword>
<keyword id="KW-0812">Transmembrane</keyword>
<keyword id="KW-1133">Transmembrane helix</keyword>
<keyword id="KW-0813">Transport</keyword>
<keyword id="KW-0830">Ubiquinone</keyword>